<evidence type="ECO:0000255" key="1">
    <source>
        <dbReference type="HAMAP-Rule" id="MF_01315"/>
    </source>
</evidence>
<evidence type="ECO:0000256" key="2">
    <source>
        <dbReference type="SAM" id="MobiDB-lite"/>
    </source>
</evidence>
<evidence type="ECO:0000305" key="3"/>
<accession>C0RJH8</accession>
<reference key="1">
    <citation type="submission" date="2009-03" db="EMBL/GenBank/DDBJ databases">
        <title>Brucella melitensis ATCC 23457 whole genome shotgun sequencing project.</title>
        <authorList>
            <person name="Setubal J.C."/>
            <person name="Boyle S."/>
            <person name="Crasta O.R."/>
            <person name="Gillespie J.J."/>
            <person name="Kenyon R.W."/>
            <person name="Lu J."/>
            <person name="Mane S."/>
            <person name="Nagrani S."/>
            <person name="Shallom J.M."/>
            <person name="Shallom S."/>
            <person name="Shukla M."/>
            <person name="Snyder E.E."/>
            <person name="Sobral B.W."/>
            <person name="Wattam A.R."/>
            <person name="Will R."/>
            <person name="Williams K."/>
            <person name="Yoo H."/>
            <person name="Munk C."/>
            <person name="Tapia R."/>
            <person name="Han C."/>
            <person name="Detter J.C."/>
            <person name="Bruce D."/>
            <person name="Brettin T.S."/>
        </authorList>
    </citation>
    <scope>NUCLEOTIDE SEQUENCE [LARGE SCALE GENOMIC DNA]</scope>
    <source>
        <strain>ATCC 23457</strain>
    </source>
</reference>
<organism>
    <name type="scientific">Brucella melitensis biotype 2 (strain ATCC 23457)</name>
    <dbReference type="NCBI Taxonomy" id="546272"/>
    <lineage>
        <taxon>Bacteria</taxon>
        <taxon>Pseudomonadati</taxon>
        <taxon>Pseudomonadota</taxon>
        <taxon>Alphaproteobacteria</taxon>
        <taxon>Hyphomicrobiales</taxon>
        <taxon>Brucellaceae</taxon>
        <taxon>Brucella/Ochrobactrum group</taxon>
        <taxon>Brucella</taxon>
    </lineage>
</organism>
<keyword id="KW-0687">Ribonucleoprotein</keyword>
<keyword id="KW-0689">Ribosomal protein</keyword>
<keyword id="KW-0694">RNA-binding</keyword>
<keyword id="KW-0699">rRNA-binding</keyword>
<keyword id="KW-0820">tRNA-binding</keyword>
<sequence>MARIAGVNIPTNKRVNIALQYIHGIGPKFAREIVTKVGIADDRRVNQLSDAEVLQIREAIDADYQVEGDLRREVSMNIKRLMDLGCYRGLRHRRSLPVRGQRTHTNARTRKGPAKAIAGKKK</sequence>
<protein>
    <recommendedName>
        <fullName evidence="1">Small ribosomal subunit protein uS13</fullName>
    </recommendedName>
    <alternativeName>
        <fullName evidence="3">30S ribosomal protein S13</fullName>
    </alternativeName>
</protein>
<gene>
    <name evidence="1" type="primary">rpsM</name>
    <name type="ordered locus">BMEA_A1255</name>
</gene>
<proteinExistence type="inferred from homology"/>
<feature type="chain" id="PRO_1000165605" description="Small ribosomal subunit protein uS13">
    <location>
        <begin position="1"/>
        <end position="122"/>
    </location>
</feature>
<feature type="region of interest" description="Disordered" evidence="2">
    <location>
        <begin position="97"/>
        <end position="122"/>
    </location>
</feature>
<comment type="function">
    <text evidence="1">Located at the top of the head of the 30S subunit, it contacts several helices of the 16S rRNA. In the 70S ribosome it contacts the 23S rRNA (bridge B1a) and protein L5 of the 50S subunit (bridge B1b), connecting the 2 subunits; these bridges are implicated in subunit movement. Contacts the tRNAs in the A and P-sites.</text>
</comment>
<comment type="subunit">
    <text evidence="1">Part of the 30S ribosomal subunit. Forms a loose heterodimer with protein S19. Forms two bridges to the 50S subunit in the 70S ribosome.</text>
</comment>
<comment type="similarity">
    <text evidence="1">Belongs to the universal ribosomal protein uS13 family.</text>
</comment>
<name>RS13_BRUMB</name>
<dbReference type="EMBL" id="CP001488">
    <property type="protein sequence ID" value="ACO00986.1"/>
    <property type="molecule type" value="Genomic_DNA"/>
</dbReference>
<dbReference type="RefSeq" id="WP_002964340.1">
    <property type="nucleotide sequence ID" value="NC_012441.1"/>
</dbReference>
<dbReference type="SMR" id="C0RJH8"/>
<dbReference type="GeneID" id="97533546"/>
<dbReference type="KEGG" id="bmi:BMEA_A1255"/>
<dbReference type="HOGENOM" id="CLU_103849_1_2_5"/>
<dbReference type="Proteomes" id="UP000001748">
    <property type="component" value="Chromosome I"/>
</dbReference>
<dbReference type="GO" id="GO:0005829">
    <property type="term" value="C:cytosol"/>
    <property type="evidence" value="ECO:0007669"/>
    <property type="project" value="TreeGrafter"/>
</dbReference>
<dbReference type="GO" id="GO:0015935">
    <property type="term" value="C:small ribosomal subunit"/>
    <property type="evidence" value="ECO:0007669"/>
    <property type="project" value="TreeGrafter"/>
</dbReference>
<dbReference type="GO" id="GO:0019843">
    <property type="term" value="F:rRNA binding"/>
    <property type="evidence" value="ECO:0007669"/>
    <property type="project" value="UniProtKB-UniRule"/>
</dbReference>
<dbReference type="GO" id="GO:0003735">
    <property type="term" value="F:structural constituent of ribosome"/>
    <property type="evidence" value="ECO:0007669"/>
    <property type="project" value="InterPro"/>
</dbReference>
<dbReference type="GO" id="GO:0000049">
    <property type="term" value="F:tRNA binding"/>
    <property type="evidence" value="ECO:0007669"/>
    <property type="project" value="UniProtKB-UniRule"/>
</dbReference>
<dbReference type="GO" id="GO:0006412">
    <property type="term" value="P:translation"/>
    <property type="evidence" value="ECO:0007669"/>
    <property type="project" value="UniProtKB-UniRule"/>
</dbReference>
<dbReference type="FunFam" id="1.10.8.50:FF:000001">
    <property type="entry name" value="30S ribosomal protein S13"/>
    <property type="match status" value="1"/>
</dbReference>
<dbReference type="FunFam" id="4.10.910.10:FF:000001">
    <property type="entry name" value="30S ribosomal protein S13"/>
    <property type="match status" value="1"/>
</dbReference>
<dbReference type="Gene3D" id="1.10.8.50">
    <property type="match status" value="1"/>
</dbReference>
<dbReference type="Gene3D" id="4.10.910.10">
    <property type="entry name" value="30s ribosomal protein s13, domain 2"/>
    <property type="match status" value="1"/>
</dbReference>
<dbReference type="HAMAP" id="MF_01315">
    <property type="entry name" value="Ribosomal_uS13"/>
    <property type="match status" value="1"/>
</dbReference>
<dbReference type="InterPro" id="IPR027437">
    <property type="entry name" value="Rbsml_uS13_C"/>
</dbReference>
<dbReference type="InterPro" id="IPR001892">
    <property type="entry name" value="Ribosomal_uS13"/>
</dbReference>
<dbReference type="InterPro" id="IPR010979">
    <property type="entry name" value="Ribosomal_uS13-like_H2TH"/>
</dbReference>
<dbReference type="InterPro" id="IPR019980">
    <property type="entry name" value="Ribosomal_uS13_bac-type"/>
</dbReference>
<dbReference type="InterPro" id="IPR018269">
    <property type="entry name" value="Ribosomal_uS13_CS"/>
</dbReference>
<dbReference type="NCBIfam" id="TIGR03631">
    <property type="entry name" value="uS13_bact"/>
    <property type="match status" value="1"/>
</dbReference>
<dbReference type="PANTHER" id="PTHR10871">
    <property type="entry name" value="30S RIBOSOMAL PROTEIN S13/40S RIBOSOMAL PROTEIN S18"/>
    <property type="match status" value="1"/>
</dbReference>
<dbReference type="PANTHER" id="PTHR10871:SF1">
    <property type="entry name" value="SMALL RIBOSOMAL SUBUNIT PROTEIN US13M"/>
    <property type="match status" value="1"/>
</dbReference>
<dbReference type="Pfam" id="PF00416">
    <property type="entry name" value="Ribosomal_S13"/>
    <property type="match status" value="1"/>
</dbReference>
<dbReference type="PIRSF" id="PIRSF002134">
    <property type="entry name" value="Ribosomal_S13"/>
    <property type="match status" value="1"/>
</dbReference>
<dbReference type="SUPFAM" id="SSF46946">
    <property type="entry name" value="S13-like H2TH domain"/>
    <property type="match status" value="1"/>
</dbReference>
<dbReference type="PROSITE" id="PS00646">
    <property type="entry name" value="RIBOSOMAL_S13_1"/>
    <property type="match status" value="1"/>
</dbReference>
<dbReference type="PROSITE" id="PS50159">
    <property type="entry name" value="RIBOSOMAL_S13_2"/>
    <property type="match status" value="1"/>
</dbReference>